<reference key="1">
    <citation type="submission" date="2003-07" db="EMBL/GenBank/DDBJ databases">
        <title>Cloning of Bos taurus aryl-hydrocarbon receptor-interacting protein (Aip).</title>
        <authorList>
            <person name="Zhou G."/>
            <person name="Li W."/>
            <person name="Yu L."/>
        </authorList>
    </citation>
    <scope>NUCLEOTIDE SEQUENCE [MRNA]</scope>
</reference>
<keyword id="KW-0963">Cytoplasm</keyword>
<keyword id="KW-0597">Phosphoprotein</keyword>
<keyword id="KW-1185">Reference proteome</keyword>
<keyword id="KW-0677">Repeat</keyword>
<keyword id="KW-0802">TPR repeat</keyword>
<sequence>MADIIARLREDGIQKRVIQEGRGALPDFQDGTKATFHYRTLCSDEEGAVLDDSRVRGKPMELIIGKKFKLPVWETIVRTMREGEIAQFCCDXKHVVLYPLVAKSLRNIAAGKDPLEGQRHCCGIAQMHXHSSLGHADLDALQQNPQPLIFDIEMLKVENPGTYQQDPWAMTDEEKAKAVPVIHQEGNRLYREGHVKEAAAKYYDAIACLKNLQMKEQPGSPDWIQLDQQITPLLLNYCQCKLVAEEYYEVLDHCSSILNKYDDNVKAYFKRGKAHAAVWNAQQAQDDFAKVLQLDPAMAPVVSRELRALEARIRQKDEEDKARFRGIFSH</sequence>
<feature type="chain" id="PRO_0000075337" description="AH receptor-interacting protein">
    <location>
        <begin position="1"/>
        <end position="330"/>
    </location>
</feature>
<feature type="domain" description="PPIase FKBP-type" evidence="4">
    <location>
        <begin position="54"/>
        <end position="146"/>
    </location>
</feature>
<feature type="repeat" description="TPR 1" evidence="3">
    <location>
        <begin position="179"/>
        <end position="212"/>
    </location>
</feature>
<feature type="repeat" description="TPR 2" evidence="2">
    <location>
        <begin position="231"/>
        <end position="264"/>
    </location>
</feature>
<feature type="repeat" description="TPR 3" evidence="3 5">
    <location>
        <begin position="265"/>
        <end position="298"/>
    </location>
</feature>
<feature type="modified residue" description="Phosphoserine" evidence="2">
    <location>
        <position position="43"/>
    </location>
</feature>
<protein>
    <recommendedName>
        <fullName>AH receptor-interacting protein</fullName>
        <shortName>AIP</shortName>
    </recommendedName>
    <alternativeName>
        <fullName>Aryl-hydrocarbon receptor-interacting protein</fullName>
    </alternativeName>
</protein>
<proteinExistence type="evidence at transcript level"/>
<organism>
    <name type="scientific">Bos taurus</name>
    <name type="common">Bovine</name>
    <dbReference type="NCBI Taxonomy" id="9913"/>
    <lineage>
        <taxon>Eukaryota</taxon>
        <taxon>Metazoa</taxon>
        <taxon>Chordata</taxon>
        <taxon>Craniata</taxon>
        <taxon>Vertebrata</taxon>
        <taxon>Euteleostomi</taxon>
        <taxon>Mammalia</taxon>
        <taxon>Eutheria</taxon>
        <taxon>Laurasiatheria</taxon>
        <taxon>Artiodactyla</taxon>
        <taxon>Ruminantia</taxon>
        <taxon>Pecora</taxon>
        <taxon>Bovidae</taxon>
        <taxon>Bovinae</taxon>
        <taxon>Bos</taxon>
    </lineage>
</organism>
<name>AIP_BOVIN</name>
<evidence type="ECO:0000250" key="1"/>
<evidence type="ECO:0000250" key="2">
    <source>
        <dbReference type="UniProtKB" id="O00170"/>
    </source>
</evidence>
<evidence type="ECO:0000255" key="3"/>
<evidence type="ECO:0000255" key="4">
    <source>
        <dbReference type="PROSITE-ProRule" id="PRU00277"/>
    </source>
</evidence>
<evidence type="ECO:0000255" key="5">
    <source>
        <dbReference type="PROSITE-ProRule" id="PRU00339"/>
    </source>
</evidence>
<comment type="function">
    <text evidence="1">May play a positive role in AHR-mediated (aromatic hydrocarbon receptor) signaling, possibly by influencing its receptivity for ligand and/or its nuclear targeting.</text>
</comment>
<comment type="subunit">
    <text>Interacts with RET in the pituitary gland; this interaction prevents the formation of the AIP-survivin complex.</text>
</comment>
<comment type="subcellular location">
    <subcellularLocation>
        <location evidence="1">Cytoplasm</location>
    </subcellularLocation>
</comment>
<dbReference type="EMBL" id="AY339893">
    <property type="protein sequence ID" value="AAQ17068.1"/>
    <property type="molecule type" value="mRNA"/>
</dbReference>
<dbReference type="FunCoup" id="Q7YRC1">
    <property type="interactions" value="1999"/>
</dbReference>
<dbReference type="STRING" id="9913.ENSBTAP00000013841"/>
<dbReference type="PaxDb" id="9913-ENSBTAP00000013841"/>
<dbReference type="eggNOG" id="KOG0545">
    <property type="taxonomic scope" value="Eukaryota"/>
</dbReference>
<dbReference type="InParanoid" id="Q7YRC1"/>
<dbReference type="OrthoDB" id="5829758at2759"/>
<dbReference type="Proteomes" id="UP000009136">
    <property type="component" value="Unplaced"/>
</dbReference>
<dbReference type="GO" id="GO:0005737">
    <property type="term" value="C:cytoplasm"/>
    <property type="evidence" value="ECO:0007669"/>
    <property type="project" value="UniProtKB-SubCell"/>
</dbReference>
<dbReference type="GO" id="GO:0003755">
    <property type="term" value="F:peptidyl-prolyl cis-trans isomerase activity"/>
    <property type="evidence" value="ECO:0007669"/>
    <property type="project" value="InterPro"/>
</dbReference>
<dbReference type="GO" id="GO:0003712">
    <property type="term" value="F:transcription coregulator activity"/>
    <property type="evidence" value="ECO:0000250"/>
    <property type="project" value="AgBase"/>
</dbReference>
<dbReference type="GO" id="GO:0006805">
    <property type="term" value="P:xenobiotic metabolic process"/>
    <property type="evidence" value="ECO:0000250"/>
    <property type="project" value="AgBase"/>
</dbReference>
<dbReference type="FunFam" id="1.25.40.10:FF:000052">
    <property type="entry name" value="Aryl-hydrocarbon-interacting protein-like 1"/>
    <property type="match status" value="1"/>
</dbReference>
<dbReference type="FunFam" id="3.10.50.40:FF:000018">
    <property type="entry name" value="Aryl-hydrocarbon-interacting protein-like 1"/>
    <property type="match status" value="1"/>
</dbReference>
<dbReference type="Gene3D" id="3.10.50.40">
    <property type="match status" value="1"/>
</dbReference>
<dbReference type="Gene3D" id="1.25.40.10">
    <property type="entry name" value="Tetratricopeptide repeat domain"/>
    <property type="match status" value="1"/>
</dbReference>
<dbReference type="InterPro" id="IPR039663">
    <property type="entry name" value="AIP/AIPL1/TTC9"/>
</dbReference>
<dbReference type="InterPro" id="IPR056277">
    <property type="entry name" value="PPIase_AIP"/>
</dbReference>
<dbReference type="InterPro" id="IPR046357">
    <property type="entry name" value="PPIase_dom_sf"/>
</dbReference>
<dbReference type="InterPro" id="IPR001179">
    <property type="entry name" value="PPIase_FKBP_dom"/>
</dbReference>
<dbReference type="InterPro" id="IPR011990">
    <property type="entry name" value="TPR-like_helical_dom_sf"/>
</dbReference>
<dbReference type="InterPro" id="IPR019734">
    <property type="entry name" value="TPR_rpt"/>
</dbReference>
<dbReference type="PANTHER" id="PTHR11242:SF3">
    <property type="entry name" value="AH RECEPTOR-INTERACTING PROTEIN"/>
    <property type="match status" value="1"/>
</dbReference>
<dbReference type="PANTHER" id="PTHR11242">
    <property type="entry name" value="ARYL HYDROCARBON RECEPTOR INTERACTING PROTEIN RELATED"/>
    <property type="match status" value="1"/>
</dbReference>
<dbReference type="Pfam" id="PF23322">
    <property type="entry name" value="PPIase_AIP"/>
    <property type="match status" value="1"/>
</dbReference>
<dbReference type="SUPFAM" id="SSF54534">
    <property type="entry name" value="FKBP-like"/>
    <property type="match status" value="1"/>
</dbReference>
<dbReference type="SUPFAM" id="SSF48452">
    <property type="entry name" value="TPR-like"/>
    <property type="match status" value="1"/>
</dbReference>
<dbReference type="PROSITE" id="PS50059">
    <property type="entry name" value="FKBP_PPIASE"/>
    <property type="match status" value="1"/>
</dbReference>
<dbReference type="PROSITE" id="PS50005">
    <property type="entry name" value="TPR"/>
    <property type="match status" value="1"/>
</dbReference>
<dbReference type="PROSITE" id="PS50293">
    <property type="entry name" value="TPR_REGION"/>
    <property type="match status" value="1"/>
</dbReference>
<gene>
    <name type="primary">AIP</name>
</gene>
<accession>Q7YRC1</accession>